<dbReference type="EC" id="7.1.1.2" evidence="1"/>
<dbReference type="EMBL" id="U83861">
    <property type="protein sequence ID" value="AAB87262.1"/>
    <property type="molecule type" value="Genomic_DNA"/>
</dbReference>
<dbReference type="PIR" id="T17098">
    <property type="entry name" value="T17098"/>
</dbReference>
<dbReference type="SMR" id="O21604"/>
<dbReference type="GO" id="GO:0005743">
    <property type="term" value="C:mitochondrial inner membrane"/>
    <property type="evidence" value="ECO:0000250"/>
    <property type="project" value="UniProtKB"/>
</dbReference>
<dbReference type="GO" id="GO:0030964">
    <property type="term" value="C:NADH dehydrogenase complex"/>
    <property type="evidence" value="ECO:0007669"/>
    <property type="project" value="TreeGrafter"/>
</dbReference>
<dbReference type="GO" id="GO:0008137">
    <property type="term" value="F:NADH dehydrogenase (ubiquinone) activity"/>
    <property type="evidence" value="ECO:0000250"/>
    <property type="project" value="UniProtKB"/>
</dbReference>
<dbReference type="GO" id="GO:0006120">
    <property type="term" value="P:mitochondrial electron transport, NADH to ubiquinone"/>
    <property type="evidence" value="ECO:0000250"/>
    <property type="project" value="UniProtKB"/>
</dbReference>
<dbReference type="FunFam" id="1.20.58.1610:FF:000004">
    <property type="entry name" value="NADH-quinone oxidoreductase subunit A"/>
    <property type="match status" value="1"/>
</dbReference>
<dbReference type="Gene3D" id="1.20.58.1610">
    <property type="entry name" value="NADH:ubiquinone/plastoquinone oxidoreductase, chain 3"/>
    <property type="match status" value="1"/>
</dbReference>
<dbReference type="InterPro" id="IPR000440">
    <property type="entry name" value="NADH_UbQ/plastoQ_OxRdtase_su3"/>
</dbReference>
<dbReference type="InterPro" id="IPR038430">
    <property type="entry name" value="NDAH_ubi_oxred_su3_sf"/>
</dbReference>
<dbReference type="PANTHER" id="PTHR11058">
    <property type="entry name" value="NADH-UBIQUINONE OXIDOREDUCTASE CHAIN 3"/>
    <property type="match status" value="1"/>
</dbReference>
<dbReference type="PANTHER" id="PTHR11058:SF9">
    <property type="entry name" value="NADH-UBIQUINONE OXIDOREDUCTASE CHAIN 3"/>
    <property type="match status" value="1"/>
</dbReference>
<dbReference type="Pfam" id="PF00507">
    <property type="entry name" value="Oxidored_q4"/>
    <property type="match status" value="1"/>
</dbReference>
<keyword id="KW-0249">Electron transport</keyword>
<keyword id="KW-0472">Membrane</keyword>
<keyword id="KW-0496">Mitochondrion</keyword>
<keyword id="KW-0999">Mitochondrion inner membrane</keyword>
<keyword id="KW-0520">NAD</keyword>
<keyword id="KW-0679">Respiratory chain</keyword>
<keyword id="KW-1278">Translocase</keyword>
<keyword id="KW-0812">Transmembrane</keyword>
<keyword id="KW-1133">Transmembrane helix</keyword>
<keyword id="KW-0813">Transport</keyword>
<keyword id="KW-0830">Ubiquinone</keyword>
<feature type="chain" id="PRO_0000117794" description="NADH-ubiquinone oxidoreductase chain 3">
    <location>
        <begin position="1"/>
        <end position="115"/>
    </location>
</feature>
<feature type="transmembrane region" description="Helical" evidence="3">
    <location>
        <begin position="4"/>
        <end position="24"/>
    </location>
</feature>
<feature type="transmembrane region" description="Helical" evidence="3">
    <location>
        <begin position="55"/>
        <end position="75"/>
    </location>
</feature>
<feature type="transmembrane region" description="Helical" evidence="3">
    <location>
        <begin position="87"/>
        <end position="107"/>
    </location>
</feature>
<organism>
    <name type="scientific">Peromyscus eremicus</name>
    <name type="common">Cactus mouse</name>
    <dbReference type="NCBI Taxonomy" id="42410"/>
    <lineage>
        <taxon>Eukaryota</taxon>
        <taxon>Metazoa</taxon>
        <taxon>Chordata</taxon>
        <taxon>Craniata</taxon>
        <taxon>Vertebrata</taxon>
        <taxon>Euteleostomi</taxon>
        <taxon>Mammalia</taxon>
        <taxon>Eutheria</taxon>
        <taxon>Euarchontoglires</taxon>
        <taxon>Glires</taxon>
        <taxon>Rodentia</taxon>
        <taxon>Myomorpha</taxon>
        <taxon>Muroidea</taxon>
        <taxon>Cricetidae</taxon>
        <taxon>Neotominae</taxon>
        <taxon>Peromyscus</taxon>
    </lineage>
</organism>
<name>NU3M_PERER</name>
<proteinExistence type="inferred from homology"/>
<geneLocation type="mitochondrion"/>
<gene>
    <name evidence="1" type="primary">MT-ND3</name>
    <name type="synonym">MTND3</name>
    <name type="synonym">NADH3</name>
    <name type="synonym">ND3</name>
</gene>
<comment type="function">
    <text evidence="1">Core subunit of the mitochondrial membrane respiratory chain NADH dehydrogenase (Complex I) which catalyzes electron transfer from NADH through the respiratory chain, using ubiquinone as an electron acceptor. Essential for the catalytic activity of complex I.</text>
</comment>
<comment type="catalytic activity">
    <reaction evidence="1">
        <text>a ubiquinone + NADH + 5 H(+)(in) = a ubiquinol + NAD(+) + 4 H(+)(out)</text>
        <dbReference type="Rhea" id="RHEA:29091"/>
        <dbReference type="Rhea" id="RHEA-COMP:9565"/>
        <dbReference type="Rhea" id="RHEA-COMP:9566"/>
        <dbReference type="ChEBI" id="CHEBI:15378"/>
        <dbReference type="ChEBI" id="CHEBI:16389"/>
        <dbReference type="ChEBI" id="CHEBI:17976"/>
        <dbReference type="ChEBI" id="CHEBI:57540"/>
        <dbReference type="ChEBI" id="CHEBI:57945"/>
        <dbReference type="EC" id="7.1.1.2"/>
    </reaction>
</comment>
<comment type="subunit">
    <text evidence="1">Core subunit of respiratory chain NADH dehydrogenase (Complex I) which is composed of 45 different subunits. Interacts with TMEM186. Interacts with TMEM242 (By similarity).</text>
</comment>
<comment type="subcellular location">
    <subcellularLocation>
        <location evidence="2">Mitochondrion inner membrane</location>
        <topology evidence="3">Multi-pass membrane protein</topology>
    </subcellularLocation>
</comment>
<comment type="similarity">
    <text evidence="4">Belongs to the complex I subunit 3 family.</text>
</comment>
<evidence type="ECO:0000250" key="1">
    <source>
        <dbReference type="UniProtKB" id="P03897"/>
    </source>
</evidence>
<evidence type="ECO:0000250" key="2">
    <source>
        <dbReference type="UniProtKB" id="P03898"/>
    </source>
</evidence>
<evidence type="ECO:0000255" key="3"/>
<evidence type="ECO:0000305" key="4"/>
<accession>O21604</accession>
<reference key="1">
    <citation type="journal article" date="1998" name="Mol. Biol. Evol.">
        <title>Molecular systematics and paleobiogeography of the South American sigmodontine rodents.</title>
        <authorList>
            <person name="Engel S.R."/>
            <person name="Hogan K.M."/>
            <person name="Taylor J.F."/>
            <person name="Davis S.K."/>
        </authorList>
    </citation>
    <scope>NUCLEOTIDE SEQUENCE [GENOMIC DNA]</scope>
</reference>
<protein>
    <recommendedName>
        <fullName evidence="1">NADH-ubiquinone oxidoreductase chain 3</fullName>
        <ecNumber evidence="1">7.1.1.2</ecNumber>
    </recommendedName>
    <alternativeName>
        <fullName>NADH dehydrogenase subunit 3</fullName>
    </alternativeName>
</protein>
<sequence>MNMLLVLLVNSILSLLLILIAFWLPQLNMYNEKANSYECGFDPMGSARLPFSMKFFLVAITFLLFDLEIALLLPLPWAIQMTNINTMTLTSFILISVLALGLAYEWLQKGLEWTE</sequence>